<protein>
    <recommendedName>
        <fullName evidence="4">Calcium-binding protein CBP</fullName>
        <shortName evidence="4">OsCBP</shortName>
    </recommendedName>
</protein>
<dbReference type="EMBL" id="DP000011">
    <property type="protein sequence ID" value="ABA95760.1"/>
    <property type="molecule type" value="Genomic_DNA"/>
</dbReference>
<dbReference type="EMBL" id="AP008218">
    <property type="protein sequence ID" value="BAF29125.1"/>
    <property type="molecule type" value="Genomic_DNA"/>
</dbReference>
<dbReference type="EMBL" id="AP014968">
    <property type="protein sequence ID" value="BAT15805.1"/>
    <property type="molecule type" value="Genomic_DNA"/>
</dbReference>
<dbReference type="EMBL" id="CM000149">
    <property type="protein sequence ID" value="EEE52738.1"/>
    <property type="status" value="ALT_SEQ"/>
    <property type="molecule type" value="Genomic_DNA"/>
</dbReference>
<dbReference type="EMBL" id="AK059278">
    <property type="protein sequence ID" value="BAG86940.1"/>
    <property type="molecule type" value="mRNA"/>
</dbReference>
<dbReference type="RefSeq" id="XP_015620664.1">
    <property type="nucleotide sequence ID" value="XM_015765178.1"/>
</dbReference>
<dbReference type="SMR" id="Q2QY10"/>
<dbReference type="FunCoup" id="Q2QY10">
    <property type="interactions" value="2885"/>
</dbReference>
<dbReference type="STRING" id="39947.Q2QY10"/>
<dbReference type="PaxDb" id="39947-Q2QY10"/>
<dbReference type="EnsemblPlants" id="Os12t0137100-01">
    <property type="protein sequence ID" value="Os12t0137100-01"/>
    <property type="gene ID" value="Os12g0137100"/>
</dbReference>
<dbReference type="Gramene" id="Os12t0137100-01">
    <property type="protein sequence ID" value="Os12t0137100-01"/>
    <property type="gene ID" value="Os12g0137100"/>
</dbReference>
<dbReference type="KEGG" id="dosa:Os12g0137100"/>
<dbReference type="KEGG" id="osa:4351450"/>
<dbReference type="eggNOG" id="KOG0037">
    <property type="taxonomic scope" value="Eukaryota"/>
</dbReference>
<dbReference type="HOGENOM" id="CLU_051357_3_0_1"/>
<dbReference type="InParanoid" id="Q2QY10"/>
<dbReference type="OMA" id="NGAYSPF"/>
<dbReference type="Proteomes" id="UP000000763">
    <property type="component" value="Chromosome 12"/>
</dbReference>
<dbReference type="Proteomes" id="UP000007752">
    <property type="component" value="Chromosome 12"/>
</dbReference>
<dbReference type="Proteomes" id="UP000059680">
    <property type="component" value="Chromosome 12"/>
</dbReference>
<dbReference type="GO" id="GO:0005509">
    <property type="term" value="F:calcium ion binding"/>
    <property type="evidence" value="ECO:0007669"/>
    <property type="project" value="InterPro"/>
</dbReference>
<dbReference type="GO" id="GO:0009610">
    <property type="term" value="P:response to symbiotic fungus"/>
    <property type="evidence" value="ECO:0000270"/>
    <property type="project" value="UniProtKB"/>
</dbReference>
<dbReference type="CDD" id="cd16180">
    <property type="entry name" value="EFh_PEF_Group_I"/>
    <property type="match status" value="1"/>
</dbReference>
<dbReference type="FunFam" id="1.10.238.10:FF:000546">
    <property type="entry name" value="Calcium-binding protein CBP"/>
    <property type="match status" value="1"/>
</dbReference>
<dbReference type="Gene3D" id="1.10.238.10">
    <property type="entry name" value="EF-hand"/>
    <property type="match status" value="1"/>
</dbReference>
<dbReference type="InterPro" id="IPR044590">
    <property type="entry name" value="CML48/49/50"/>
</dbReference>
<dbReference type="InterPro" id="IPR011992">
    <property type="entry name" value="EF-hand-dom_pair"/>
</dbReference>
<dbReference type="InterPro" id="IPR018247">
    <property type="entry name" value="EF_Hand_1_Ca_BS"/>
</dbReference>
<dbReference type="InterPro" id="IPR002048">
    <property type="entry name" value="EF_hand_dom"/>
</dbReference>
<dbReference type="PANTHER" id="PTHR46824">
    <property type="entry name" value="CALCIUM-BINDING PROTEIN CML48-RELATED"/>
    <property type="match status" value="1"/>
</dbReference>
<dbReference type="PANTHER" id="PTHR46824:SF1">
    <property type="entry name" value="CALCIUM-BINDING PROTEIN CML49-RELATED"/>
    <property type="match status" value="1"/>
</dbReference>
<dbReference type="Pfam" id="PF13202">
    <property type="entry name" value="EF-hand_5"/>
    <property type="match status" value="1"/>
</dbReference>
<dbReference type="Pfam" id="PF13499">
    <property type="entry name" value="EF-hand_7"/>
    <property type="match status" value="1"/>
</dbReference>
<dbReference type="SMART" id="SM00054">
    <property type="entry name" value="EFh"/>
    <property type="match status" value="2"/>
</dbReference>
<dbReference type="SUPFAM" id="SSF47473">
    <property type="entry name" value="EF-hand"/>
    <property type="match status" value="1"/>
</dbReference>
<dbReference type="PROSITE" id="PS00018">
    <property type="entry name" value="EF_HAND_1"/>
    <property type="match status" value="2"/>
</dbReference>
<dbReference type="PROSITE" id="PS50222">
    <property type="entry name" value="EF_HAND_2"/>
    <property type="match status" value="2"/>
</dbReference>
<evidence type="ECO:0000255" key="1">
    <source>
        <dbReference type="PROSITE-ProRule" id="PRU00448"/>
    </source>
</evidence>
<evidence type="ECO:0000256" key="2">
    <source>
        <dbReference type="SAM" id="MobiDB-lite"/>
    </source>
</evidence>
<evidence type="ECO:0000269" key="3">
    <source>
    </source>
</evidence>
<evidence type="ECO:0000303" key="4">
    <source>
    </source>
</evidence>
<evidence type="ECO:0000305" key="5"/>
<evidence type="ECO:0000305" key="6">
    <source>
    </source>
</evidence>
<evidence type="ECO:0000312" key="7">
    <source>
        <dbReference type="EMBL" id="ABA95760.1"/>
    </source>
</evidence>
<evidence type="ECO:0000312" key="8">
    <source>
        <dbReference type="EMBL" id="BAF29125.1"/>
    </source>
</evidence>
<evidence type="ECO:0000312" key="9">
    <source>
        <dbReference type="EMBL" id="BAT15805.1"/>
    </source>
</evidence>
<evidence type="ECO:0000312" key="10">
    <source>
        <dbReference type="EMBL" id="EEE52738.1"/>
    </source>
</evidence>
<gene>
    <name evidence="4" type="primary">CBP</name>
    <name evidence="7" type="ordered locus">LOC_Os12g04240</name>
    <name evidence="8" type="ordered locus">Os12g0137100</name>
    <name evidence="10" type="ORF">OsJ_35159</name>
    <name evidence="9" type="ORF">OSNPB_120137100</name>
</gene>
<sequence length="292" mass="30593">MAGYPPNPGSGYPYGGAGGYGAPPPPYGSSPAPSAPPYGAKPPKEGKTSSSSAPYYGGGGGYGAPPSTQPYGSGGGYGAPPSSQPYGAPYGAPPPSSAPYGAPGGYGSPFASLVPSAFPPGTDPNVVACFQAADRDGSGMIDDKELQSALSGYSQSFSLRTVHLLMYLFTNTNVRKIGPKEFTSVFYSLQNWRSIFERFDRDRSGKIDATELRDALLSLGYSVSPTVLDLLVSKFDKTGGKNKAIEYDNFIECCLTVKGLTEKFKEKDTAFSGSATFTYEAFMLTVLPFLIA</sequence>
<name>CBP_ORYSJ</name>
<comment type="function">
    <text evidence="6">Potential calcium sensor.</text>
</comment>
<comment type="induction">
    <text evidence="3">Up-regulated in leaves of mycorrhizal plants upon arbuscular mycorrhizal (AM) symbioses with G.intraradices.</text>
</comment>
<comment type="sequence caution" evidence="5">
    <conflict type="erroneous gene model prediction">
        <sequence resource="EMBL-CDS" id="EEE52738"/>
    </conflict>
</comment>
<comment type="sequence caution" evidence="5">
    <conflict type="frameshift">
        <sequence resource="EMBL-CDS" id="EEE52738"/>
    </conflict>
</comment>
<feature type="chain" id="PRO_0000447279" description="Calcium-binding protein CBP">
    <location>
        <begin position="1"/>
        <end position="292"/>
    </location>
</feature>
<feature type="domain" description="EF-hand 1" evidence="1">
    <location>
        <begin position="121"/>
        <end position="156"/>
    </location>
</feature>
<feature type="domain" description="EF-hand 2" evidence="1">
    <location>
        <begin position="187"/>
        <end position="222"/>
    </location>
</feature>
<feature type="region of interest" description="Disordered" evidence="2">
    <location>
        <begin position="1"/>
        <end position="80"/>
    </location>
</feature>
<feature type="compositionally biased region" description="Gly residues" evidence="2">
    <location>
        <begin position="12"/>
        <end position="21"/>
    </location>
</feature>
<feature type="compositionally biased region" description="Pro residues" evidence="2">
    <location>
        <begin position="22"/>
        <end position="40"/>
    </location>
</feature>
<feature type="binding site" evidence="1">
    <location>
        <position position="134"/>
    </location>
    <ligand>
        <name>Ca(2+)</name>
        <dbReference type="ChEBI" id="CHEBI:29108"/>
        <label>1</label>
    </ligand>
</feature>
<feature type="binding site" evidence="1">
    <location>
        <position position="136"/>
    </location>
    <ligand>
        <name>Ca(2+)</name>
        <dbReference type="ChEBI" id="CHEBI:29108"/>
        <label>1</label>
    </ligand>
</feature>
<feature type="binding site" evidence="1">
    <location>
        <position position="138"/>
    </location>
    <ligand>
        <name>Ca(2+)</name>
        <dbReference type="ChEBI" id="CHEBI:29108"/>
        <label>1</label>
    </ligand>
</feature>
<feature type="binding site" evidence="1">
    <location>
        <position position="140"/>
    </location>
    <ligand>
        <name>Ca(2+)</name>
        <dbReference type="ChEBI" id="CHEBI:29108"/>
        <label>1</label>
    </ligand>
</feature>
<feature type="binding site" evidence="1">
    <location>
        <position position="145"/>
    </location>
    <ligand>
        <name>Ca(2+)</name>
        <dbReference type="ChEBI" id="CHEBI:29108"/>
        <label>1</label>
    </ligand>
</feature>
<feature type="binding site" evidence="1">
    <location>
        <position position="200"/>
    </location>
    <ligand>
        <name>Ca(2+)</name>
        <dbReference type="ChEBI" id="CHEBI:29108"/>
        <label>2</label>
    </ligand>
</feature>
<feature type="binding site" evidence="1">
    <location>
        <position position="202"/>
    </location>
    <ligand>
        <name>Ca(2+)</name>
        <dbReference type="ChEBI" id="CHEBI:29108"/>
        <label>2</label>
    </ligand>
</feature>
<feature type="binding site" evidence="1">
    <location>
        <position position="204"/>
    </location>
    <ligand>
        <name>Ca(2+)</name>
        <dbReference type="ChEBI" id="CHEBI:29108"/>
        <label>2</label>
    </ligand>
</feature>
<feature type="binding site" evidence="1">
    <location>
        <position position="206"/>
    </location>
    <ligand>
        <name>Ca(2+)</name>
        <dbReference type="ChEBI" id="CHEBI:29108"/>
        <label>2</label>
    </ligand>
</feature>
<feature type="binding site" evidence="1">
    <location>
        <position position="211"/>
    </location>
    <ligand>
        <name>Ca(2+)</name>
        <dbReference type="ChEBI" id="CHEBI:29108"/>
        <label>2</label>
    </ligand>
</feature>
<reference key="1">
    <citation type="journal article" date="2005" name="BMC Biol.">
        <title>The sequence of rice chromosomes 11 and 12, rich in disease resistance genes and recent gene duplications.</title>
        <authorList>
            <consortium name="The rice chromosomes 11 and 12 sequencing consortia"/>
        </authorList>
    </citation>
    <scope>NUCLEOTIDE SEQUENCE [LARGE SCALE GENOMIC DNA]</scope>
    <source>
        <strain>cv. Nipponbare</strain>
    </source>
</reference>
<reference key="2">
    <citation type="journal article" date="2005" name="Nature">
        <title>The map-based sequence of the rice genome.</title>
        <authorList>
            <consortium name="International rice genome sequencing project (IRGSP)"/>
        </authorList>
    </citation>
    <scope>NUCLEOTIDE SEQUENCE [LARGE SCALE GENOMIC DNA]</scope>
    <source>
        <strain>cv. Nipponbare</strain>
    </source>
</reference>
<reference key="3">
    <citation type="journal article" date="2008" name="Nucleic Acids Res.">
        <title>The rice annotation project database (RAP-DB): 2008 update.</title>
        <authorList>
            <consortium name="The rice annotation project (RAP)"/>
        </authorList>
    </citation>
    <scope>GENOME REANNOTATION</scope>
    <source>
        <strain>cv. Nipponbare</strain>
    </source>
</reference>
<reference key="4">
    <citation type="journal article" date="2013" name="Rice">
        <title>Improvement of the Oryza sativa Nipponbare reference genome using next generation sequence and optical map data.</title>
        <authorList>
            <person name="Kawahara Y."/>
            <person name="de la Bastide M."/>
            <person name="Hamilton J.P."/>
            <person name="Kanamori H."/>
            <person name="McCombie W.R."/>
            <person name="Ouyang S."/>
            <person name="Schwartz D.C."/>
            <person name="Tanaka T."/>
            <person name="Wu J."/>
            <person name="Zhou S."/>
            <person name="Childs K.L."/>
            <person name="Davidson R.M."/>
            <person name="Lin H."/>
            <person name="Quesada-Ocampo L."/>
            <person name="Vaillancourt B."/>
            <person name="Sakai H."/>
            <person name="Lee S.S."/>
            <person name="Kim J."/>
            <person name="Numa H."/>
            <person name="Itoh T."/>
            <person name="Buell C.R."/>
            <person name="Matsumoto T."/>
        </authorList>
    </citation>
    <scope>GENOME REANNOTATION</scope>
    <source>
        <strain>cv. Nipponbare</strain>
    </source>
</reference>
<reference key="5">
    <citation type="journal article" date="2005" name="PLoS Biol.">
        <title>The genomes of Oryza sativa: a history of duplications.</title>
        <authorList>
            <person name="Yu J."/>
            <person name="Wang J."/>
            <person name="Lin W."/>
            <person name="Li S."/>
            <person name="Li H."/>
            <person name="Zhou J."/>
            <person name="Ni P."/>
            <person name="Dong W."/>
            <person name="Hu S."/>
            <person name="Zeng C."/>
            <person name="Zhang J."/>
            <person name="Zhang Y."/>
            <person name="Li R."/>
            <person name="Xu Z."/>
            <person name="Li S."/>
            <person name="Li X."/>
            <person name="Zheng H."/>
            <person name="Cong L."/>
            <person name="Lin L."/>
            <person name="Yin J."/>
            <person name="Geng J."/>
            <person name="Li G."/>
            <person name="Shi J."/>
            <person name="Liu J."/>
            <person name="Lv H."/>
            <person name="Li J."/>
            <person name="Wang J."/>
            <person name="Deng Y."/>
            <person name="Ran L."/>
            <person name="Shi X."/>
            <person name="Wang X."/>
            <person name="Wu Q."/>
            <person name="Li C."/>
            <person name="Ren X."/>
            <person name="Wang J."/>
            <person name="Wang X."/>
            <person name="Li D."/>
            <person name="Liu D."/>
            <person name="Zhang X."/>
            <person name="Ji Z."/>
            <person name="Zhao W."/>
            <person name="Sun Y."/>
            <person name="Zhang Z."/>
            <person name="Bao J."/>
            <person name="Han Y."/>
            <person name="Dong L."/>
            <person name="Ji J."/>
            <person name="Chen P."/>
            <person name="Wu S."/>
            <person name="Liu J."/>
            <person name="Xiao Y."/>
            <person name="Bu D."/>
            <person name="Tan J."/>
            <person name="Yang L."/>
            <person name="Ye C."/>
            <person name="Zhang J."/>
            <person name="Xu J."/>
            <person name="Zhou Y."/>
            <person name="Yu Y."/>
            <person name="Zhang B."/>
            <person name="Zhuang S."/>
            <person name="Wei H."/>
            <person name="Liu B."/>
            <person name="Lei M."/>
            <person name="Yu H."/>
            <person name="Li Y."/>
            <person name="Xu H."/>
            <person name="Wei S."/>
            <person name="He X."/>
            <person name="Fang L."/>
            <person name="Zhang Z."/>
            <person name="Zhang Y."/>
            <person name="Huang X."/>
            <person name="Su Z."/>
            <person name="Tong W."/>
            <person name="Li J."/>
            <person name="Tong Z."/>
            <person name="Li S."/>
            <person name="Ye J."/>
            <person name="Wang L."/>
            <person name="Fang L."/>
            <person name="Lei T."/>
            <person name="Chen C.-S."/>
            <person name="Chen H.-C."/>
            <person name="Xu Z."/>
            <person name="Li H."/>
            <person name="Huang H."/>
            <person name="Zhang F."/>
            <person name="Xu H."/>
            <person name="Li N."/>
            <person name="Zhao C."/>
            <person name="Li S."/>
            <person name="Dong L."/>
            <person name="Huang Y."/>
            <person name="Li L."/>
            <person name="Xi Y."/>
            <person name="Qi Q."/>
            <person name="Li W."/>
            <person name="Zhang B."/>
            <person name="Hu W."/>
            <person name="Zhang Y."/>
            <person name="Tian X."/>
            <person name="Jiao Y."/>
            <person name="Liang X."/>
            <person name="Jin J."/>
            <person name="Gao L."/>
            <person name="Zheng W."/>
            <person name="Hao B."/>
            <person name="Liu S.-M."/>
            <person name="Wang W."/>
            <person name="Yuan L."/>
            <person name="Cao M."/>
            <person name="McDermott J."/>
            <person name="Samudrala R."/>
            <person name="Wang J."/>
            <person name="Wong G.K.-S."/>
            <person name="Yang H."/>
        </authorList>
    </citation>
    <scope>NUCLEOTIDE SEQUENCE [LARGE SCALE GENOMIC DNA]</scope>
    <source>
        <strain>cv. Nipponbare</strain>
    </source>
</reference>
<reference key="6">
    <citation type="journal article" date="2003" name="Science">
        <title>Collection, mapping, and annotation of over 28,000 cDNA clones from japonica rice.</title>
        <authorList>
            <consortium name="The rice full-length cDNA consortium"/>
        </authorList>
    </citation>
    <scope>NUCLEOTIDE SEQUENCE [LARGE SCALE MRNA]</scope>
    <source>
        <strain>cv. Nipponbare</strain>
    </source>
</reference>
<reference key="7">
    <citation type="journal article" date="2012" name="Mol. Plant Pathol.">
        <title>The arbuscular mycorrhizal symbiosis promotes the systemic induction of regulatory defence-related genes in rice leaves and confers resistance to pathogen infection.</title>
        <authorList>
            <person name="Campos-Soriano L."/>
            <person name="Garcia-Martinez J."/>
            <person name="San Segundo B."/>
        </authorList>
    </citation>
    <scope>FUNCTION</scope>
    <scope>INDUCTION BY GLOMUS INTRARADICES</scope>
</reference>
<proteinExistence type="evidence at transcript level"/>
<accession>Q2QY10</accession>
<accession>B9GBT1</accession>
<organism>
    <name type="scientific">Oryza sativa subsp. japonica</name>
    <name type="common">Rice</name>
    <dbReference type="NCBI Taxonomy" id="39947"/>
    <lineage>
        <taxon>Eukaryota</taxon>
        <taxon>Viridiplantae</taxon>
        <taxon>Streptophyta</taxon>
        <taxon>Embryophyta</taxon>
        <taxon>Tracheophyta</taxon>
        <taxon>Spermatophyta</taxon>
        <taxon>Magnoliopsida</taxon>
        <taxon>Liliopsida</taxon>
        <taxon>Poales</taxon>
        <taxon>Poaceae</taxon>
        <taxon>BOP clade</taxon>
        <taxon>Oryzoideae</taxon>
        <taxon>Oryzeae</taxon>
        <taxon>Oryzinae</taxon>
        <taxon>Oryza</taxon>
        <taxon>Oryza sativa</taxon>
    </lineage>
</organism>
<keyword id="KW-0106">Calcium</keyword>
<keyword id="KW-0479">Metal-binding</keyword>
<keyword id="KW-1185">Reference proteome</keyword>
<keyword id="KW-0677">Repeat</keyword>